<feature type="chain" id="PRO_0000299397" description="Nurim">
    <location>
        <begin position="1"/>
        <end position="262"/>
    </location>
</feature>
<feature type="topological domain" description="Nuclear" evidence="2">
    <location>
        <begin position="1"/>
        <end position="4"/>
    </location>
</feature>
<feature type="transmembrane region" description="Helical" evidence="2">
    <location>
        <begin position="5"/>
        <end position="28"/>
    </location>
</feature>
<feature type="topological domain" description="Perinuclear space" evidence="2">
    <location>
        <begin position="29"/>
        <end position="58"/>
    </location>
</feature>
<feature type="transmembrane region" description="Helical" evidence="2">
    <location>
        <begin position="59"/>
        <end position="80"/>
    </location>
</feature>
<feature type="topological domain" description="Nuclear" evidence="2">
    <location>
        <begin position="81"/>
        <end position="97"/>
    </location>
</feature>
<feature type="transmembrane region" description="Helical" evidence="2">
    <location>
        <begin position="98"/>
        <end position="114"/>
    </location>
</feature>
<feature type="topological domain" description="Perinuclear space" evidence="2">
    <location>
        <begin position="115"/>
        <end position="133"/>
    </location>
</feature>
<feature type="transmembrane region" description="Helical" evidence="2">
    <location>
        <begin position="134"/>
        <end position="164"/>
    </location>
</feature>
<feature type="topological domain" description="Nuclear" evidence="2">
    <location>
        <begin position="165"/>
        <end position="191"/>
    </location>
</feature>
<feature type="transmembrane region" description="Helical" evidence="2">
    <location>
        <begin position="192"/>
        <end position="210"/>
    </location>
</feature>
<feature type="topological domain" description="Perinuclear space" evidence="2">
    <location>
        <begin position="211"/>
        <end position="216"/>
    </location>
</feature>
<feature type="transmembrane region" description="Helical" evidence="2">
    <location>
        <begin position="217"/>
        <end position="234"/>
    </location>
</feature>
<feature type="topological domain" description="Nuclear" evidence="2">
    <location>
        <begin position="235"/>
        <end position="262"/>
    </location>
</feature>
<gene>
    <name type="primary">Nrm</name>
</gene>
<dbReference type="EMBL" id="BC021750">
    <property type="protein sequence ID" value="AAH21750.1"/>
    <property type="molecule type" value="mRNA"/>
</dbReference>
<dbReference type="EMBL" id="BC026576">
    <property type="protein sequence ID" value="AAH26576.1"/>
    <property type="molecule type" value="mRNA"/>
</dbReference>
<dbReference type="CCDS" id="CCDS28708.1"/>
<dbReference type="RefSeq" id="NP_598883.1">
    <property type="nucleotide sequence ID" value="NM_134122.2"/>
</dbReference>
<dbReference type="BioGRID" id="223084">
    <property type="interactions" value="2"/>
</dbReference>
<dbReference type="FunCoup" id="Q8VC65">
    <property type="interactions" value="994"/>
</dbReference>
<dbReference type="STRING" id="10090.ENSMUSP00000073873"/>
<dbReference type="iPTMnet" id="Q8VC65"/>
<dbReference type="PhosphoSitePlus" id="Q8VC65"/>
<dbReference type="SwissPalm" id="Q8VC65"/>
<dbReference type="PaxDb" id="10090-ENSMUSP00000073873"/>
<dbReference type="PeptideAtlas" id="Q8VC65"/>
<dbReference type="ProteomicsDB" id="293735"/>
<dbReference type="Pumba" id="Q8VC65"/>
<dbReference type="Antibodypedia" id="26491">
    <property type="antibodies" value="53 antibodies from 16 providers"/>
</dbReference>
<dbReference type="DNASU" id="106582"/>
<dbReference type="Ensembl" id="ENSMUST00000074259.15">
    <property type="protein sequence ID" value="ENSMUSP00000073873.9"/>
    <property type="gene ID" value="ENSMUSG00000059791.15"/>
</dbReference>
<dbReference type="GeneID" id="106582"/>
<dbReference type="KEGG" id="mmu:106582"/>
<dbReference type="UCSC" id="uc008cis.1">
    <property type="organism name" value="mouse"/>
</dbReference>
<dbReference type="AGR" id="MGI:2146855"/>
<dbReference type="CTD" id="11270"/>
<dbReference type="MGI" id="MGI:2146855">
    <property type="gene designation" value="Nrm"/>
</dbReference>
<dbReference type="VEuPathDB" id="HostDB:ENSMUSG00000059791"/>
<dbReference type="eggNOG" id="ENOG502RS62">
    <property type="taxonomic scope" value="Eukaryota"/>
</dbReference>
<dbReference type="GeneTree" id="ENSGT00390000008146"/>
<dbReference type="HOGENOM" id="CLU_083708_1_0_1"/>
<dbReference type="InParanoid" id="Q8VC65"/>
<dbReference type="OMA" id="WSIWFPL"/>
<dbReference type="OrthoDB" id="10050858at2759"/>
<dbReference type="PhylomeDB" id="Q8VC65"/>
<dbReference type="TreeFam" id="TF324853"/>
<dbReference type="BioGRID-ORCS" id="106582">
    <property type="hits" value="5 hits in 80 CRISPR screens"/>
</dbReference>
<dbReference type="ChiTaRS" id="Nrm">
    <property type="organism name" value="mouse"/>
</dbReference>
<dbReference type="PRO" id="PR:Q8VC65"/>
<dbReference type="Proteomes" id="UP000000589">
    <property type="component" value="Chromosome 17"/>
</dbReference>
<dbReference type="RNAct" id="Q8VC65">
    <property type="molecule type" value="protein"/>
</dbReference>
<dbReference type="Bgee" id="ENSMUSG00000059791">
    <property type="expression patterns" value="Expressed in spermatid and 182 other cell types or tissues"/>
</dbReference>
<dbReference type="ExpressionAtlas" id="Q8VC65">
    <property type="expression patterns" value="baseline and differential"/>
</dbReference>
<dbReference type="GO" id="GO:0005635">
    <property type="term" value="C:nuclear envelope"/>
    <property type="evidence" value="ECO:0000250"/>
    <property type="project" value="UniProtKB"/>
</dbReference>
<dbReference type="GO" id="GO:0005637">
    <property type="term" value="C:nuclear inner membrane"/>
    <property type="evidence" value="ECO:0000304"/>
    <property type="project" value="MGI"/>
</dbReference>
<dbReference type="GO" id="GO:0005652">
    <property type="term" value="C:nuclear lamina"/>
    <property type="evidence" value="ECO:0000304"/>
    <property type="project" value="MGI"/>
</dbReference>
<dbReference type="GO" id="GO:0031965">
    <property type="term" value="C:nuclear membrane"/>
    <property type="evidence" value="ECO:0000269"/>
    <property type="project" value="MGI"/>
</dbReference>
<dbReference type="InterPro" id="IPR033580">
    <property type="entry name" value="Nurim-like"/>
</dbReference>
<dbReference type="PANTHER" id="PTHR31040">
    <property type="entry name" value="NURIM"/>
    <property type="match status" value="1"/>
</dbReference>
<dbReference type="PANTHER" id="PTHR31040:SF1">
    <property type="entry name" value="NURIM"/>
    <property type="match status" value="1"/>
</dbReference>
<comment type="subcellular location">
    <subcellularLocation>
        <location evidence="1">Nucleus inner membrane</location>
        <topology evidence="1">Multi-pass membrane protein</topology>
    </subcellularLocation>
</comment>
<comment type="similarity">
    <text evidence="3">Belongs to the nurim family.</text>
</comment>
<reference key="1">
    <citation type="journal article" date="2004" name="Genome Res.">
        <title>The status, quality, and expansion of the NIH full-length cDNA project: the Mammalian Gene Collection (MGC).</title>
        <authorList>
            <consortium name="The MGC Project Team"/>
        </authorList>
    </citation>
    <scope>NUCLEOTIDE SEQUENCE [LARGE SCALE MRNA]</scope>
    <source>
        <strain>FVB/N</strain>
        <tissue>Colon</tissue>
        <tissue>Eye</tissue>
    </source>
</reference>
<reference key="2">
    <citation type="journal article" date="2010" name="Cell">
        <title>A tissue-specific atlas of mouse protein phosphorylation and expression.</title>
        <authorList>
            <person name="Huttlin E.L."/>
            <person name="Jedrychowski M.P."/>
            <person name="Elias J.E."/>
            <person name="Goswami T."/>
            <person name="Rad R."/>
            <person name="Beausoleil S.A."/>
            <person name="Villen J."/>
            <person name="Haas W."/>
            <person name="Sowa M.E."/>
            <person name="Gygi S.P."/>
        </authorList>
    </citation>
    <scope>IDENTIFICATION BY MASS SPECTROMETRY [LARGE SCALE ANALYSIS]</scope>
    <source>
        <tissue>Spleen</tissue>
    </source>
</reference>
<keyword id="KW-0472">Membrane</keyword>
<keyword id="KW-0539">Nucleus</keyword>
<keyword id="KW-1185">Reference proteome</keyword>
<keyword id="KW-0812">Transmembrane</keyword>
<keyword id="KW-1133">Transmembrane helix</keyword>
<organism>
    <name type="scientific">Mus musculus</name>
    <name type="common">Mouse</name>
    <dbReference type="NCBI Taxonomy" id="10090"/>
    <lineage>
        <taxon>Eukaryota</taxon>
        <taxon>Metazoa</taxon>
        <taxon>Chordata</taxon>
        <taxon>Craniata</taxon>
        <taxon>Vertebrata</taxon>
        <taxon>Euteleostomi</taxon>
        <taxon>Mammalia</taxon>
        <taxon>Eutheria</taxon>
        <taxon>Euarchontoglires</taxon>
        <taxon>Glires</taxon>
        <taxon>Rodentia</taxon>
        <taxon>Myomorpha</taxon>
        <taxon>Muroidea</taxon>
        <taxon>Muridae</taxon>
        <taxon>Murinae</taxon>
        <taxon>Mus</taxon>
        <taxon>Mus</taxon>
    </lineage>
</organism>
<accession>Q8VC65</accession>
<evidence type="ECO:0000250" key="1"/>
<evidence type="ECO:0000255" key="2"/>
<evidence type="ECO:0000305" key="3"/>
<sequence>MAPALLLVPAALASFILAFGTGVEFVRFTSLRPLLGGIPESGGPDARHGWLAALQDRSILASLAWDLCLLLLFVVQHSLMATEAVKAWTSRYFGVLQRSLYVACTALALQLVMRYWETTPRGPVLWEARAEPWATWVPLLCFVLHVVSWLLIFSILLVFDYAELMGLKQVYYHVLGLGEPLSLKSPRALRLFSHLRHPVCVELLTVLWVVPTLGTDRLLLALLFTLYLGLAHGLDQQDLRYLRSQLQRKLHLLSRPQDGEAE</sequence>
<name>NRM_MOUSE</name>
<protein>
    <recommendedName>
        <fullName>Nurim</fullName>
    </recommendedName>
    <alternativeName>
        <fullName>Nuclear envelope membrane protein</fullName>
    </alternativeName>
    <alternativeName>
        <fullName>Nuclear rim protein</fullName>
    </alternativeName>
</protein>
<proteinExistence type="evidence at protein level"/>